<proteinExistence type="inferred from homology"/>
<reference key="1">
    <citation type="journal article" date="2005" name="Infect. Immun.">
        <title>Comparative genomic analysis of Chlamydia trachomatis oculotropic and genitotropic strains.</title>
        <authorList>
            <person name="Carlson J.H."/>
            <person name="Porcella S.F."/>
            <person name="McClarty G."/>
            <person name="Caldwell H.D."/>
        </authorList>
    </citation>
    <scope>NUCLEOTIDE SEQUENCE [LARGE SCALE GENOMIC DNA]</scope>
    <source>
        <strain>ATCC VR-571B / DSM 19440 / HAR-13</strain>
    </source>
</reference>
<comment type="function">
    <text evidence="1">Can catalyze the hydrolysis of ATP in the presence of single-stranded DNA, the ATP-dependent uptake of single-stranded DNA by duplex DNA, and the ATP-dependent hybridization of homologous single-stranded DNAs. It interacts with LexA causing its activation and leading to its autocatalytic cleavage.</text>
</comment>
<comment type="subcellular location">
    <subcellularLocation>
        <location evidence="1">Cytoplasm</location>
    </subcellularLocation>
</comment>
<comment type="similarity">
    <text evidence="1">Belongs to the RecA family.</text>
</comment>
<name>RECA_CHLTA</name>
<feature type="chain" id="PRO_1000047899" description="Protein RecA">
    <location>
        <begin position="1"/>
        <end position="352"/>
    </location>
</feature>
<feature type="binding site" evidence="1">
    <location>
        <begin position="67"/>
        <end position="74"/>
    </location>
    <ligand>
        <name>ATP</name>
        <dbReference type="ChEBI" id="CHEBI:30616"/>
    </ligand>
</feature>
<keyword id="KW-0067">ATP-binding</keyword>
<keyword id="KW-0963">Cytoplasm</keyword>
<keyword id="KW-0227">DNA damage</keyword>
<keyword id="KW-0233">DNA recombination</keyword>
<keyword id="KW-0234">DNA repair</keyword>
<keyword id="KW-0238">DNA-binding</keyword>
<keyword id="KW-0547">Nucleotide-binding</keyword>
<keyword id="KW-0742">SOS response</keyword>
<organism>
    <name type="scientific">Chlamydia trachomatis serovar A (strain ATCC VR-571B / DSM 19440 / HAR-13)</name>
    <dbReference type="NCBI Taxonomy" id="315277"/>
    <lineage>
        <taxon>Bacteria</taxon>
        <taxon>Pseudomonadati</taxon>
        <taxon>Chlamydiota</taxon>
        <taxon>Chlamydiia</taxon>
        <taxon>Chlamydiales</taxon>
        <taxon>Chlamydiaceae</taxon>
        <taxon>Chlamydia/Chlamydophila group</taxon>
        <taxon>Chlamydia</taxon>
    </lineage>
</organism>
<dbReference type="EMBL" id="CP000051">
    <property type="protein sequence ID" value="AAX50927.1"/>
    <property type="molecule type" value="Genomic_DNA"/>
</dbReference>
<dbReference type="RefSeq" id="WP_009872021.1">
    <property type="nucleotide sequence ID" value="NC_007429.1"/>
</dbReference>
<dbReference type="SMR" id="Q3KL45"/>
<dbReference type="KEGG" id="cta:CTA_0705"/>
<dbReference type="HOGENOM" id="CLU_040469_3_2_0"/>
<dbReference type="Proteomes" id="UP000002532">
    <property type="component" value="Chromosome"/>
</dbReference>
<dbReference type="GO" id="GO:0005829">
    <property type="term" value="C:cytosol"/>
    <property type="evidence" value="ECO:0007669"/>
    <property type="project" value="TreeGrafter"/>
</dbReference>
<dbReference type="GO" id="GO:0005524">
    <property type="term" value="F:ATP binding"/>
    <property type="evidence" value="ECO:0007669"/>
    <property type="project" value="UniProtKB-UniRule"/>
</dbReference>
<dbReference type="GO" id="GO:0016887">
    <property type="term" value="F:ATP hydrolysis activity"/>
    <property type="evidence" value="ECO:0007669"/>
    <property type="project" value="InterPro"/>
</dbReference>
<dbReference type="GO" id="GO:0140664">
    <property type="term" value="F:ATP-dependent DNA damage sensor activity"/>
    <property type="evidence" value="ECO:0007669"/>
    <property type="project" value="InterPro"/>
</dbReference>
<dbReference type="GO" id="GO:0003684">
    <property type="term" value="F:damaged DNA binding"/>
    <property type="evidence" value="ECO:0007669"/>
    <property type="project" value="UniProtKB-UniRule"/>
</dbReference>
<dbReference type="GO" id="GO:0003697">
    <property type="term" value="F:single-stranded DNA binding"/>
    <property type="evidence" value="ECO:0007669"/>
    <property type="project" value="UniProtKB-UniRule"/>
</dbReference>
<dbReference type="GO" id="GO:0006310">
    <property type="term" value="P:DNA recombination"/>
    <property type="evidence" value="ECO:0007669"/>
    <property type="project" value="UniProtKB-UniRule"/>
</dbReference>
<dbReference type="GO" id="GO:0006281">
    <property type="term" value="P:DNA repair"/>
    <property type="evidence" value="ECO:0007669"/>
    <property type="project" value="UniProtKB-UniRule"/>
</dbReference>
<dbReference type="GO" id="GO:0009432">
    <property type="term" value="P:SOS response"/>
    <property type="evidence" value="ECO:0007669"/>
    <property type="project" value="UniProtKB-UniRule"/>
</dbReference>
<dbReference type="CDD" id="cd00983">
    <property type="entry name" value="RecA"/>
    <property type="match status" value="1"/>
</dbReference>
<dbReference type="FunFam" id="3.40.50.300:FF:000087">
    <property type="entry name" value="Recombinase RecA"/>
    <property type="match status" value="1"/>
</dbReference>
<dbReference type="Gene3D" id="3.40.50.300">
    <property type="entry name" value="P-loop containing nucleotide triphosphate hydrolases"/>
    <property type="match status" value="1"/>
</dbReference>
<dbReference type="HAMAP" id="MF_00268">
    <property type="entry name" value="RecA"/>
    <property type="match status" value="1"/>
</dbReference>
<dbReference type="InterPro" id="IPR003593">
    <property type="entry name" value="AAA+_ATPase"/>
</dbReference>
<dbReference type="InterPro" id="IPR013765">
    <property type="entry name" value="DNA_recomb/repair_RecA"/>
</dbReference>
<dbReference type="InterPro" id="IPR020584">
    <property type="entry name" value="DNA_recomb/repair_RecA_CS"/>
</dbReference>
<dbReference type="InterPro" id="IPR027417">
    <property type="entry name" value="P-loop_NTPase"/>
</dbReference>
<dbReference type="InterPro" id="IPR049261">
    <property type="entry name" value="RecA-like_C"/>
</dbReference>
<dbReference type="InterPro" id="IPR049428">
    <property type="entry name" value="RecA-like_N"/>
</dbReference>
<dbReference type="InterPro" id="IPR020588">
    <property type="entry name" value="RecA_ATP-bd"/>
</dbReference>
<dbReference type="InterPro" id="IPR023400">
    <property type="entry name" value="RecA_C_sf"/>
</dbReference>
<dbReference type="InterPro" id="IPR020587">
    <property type="entry name" value="RecA_monomer-monomer_interface"/>
</dbReference>
<dbReference type="NCBIfam" id="TIGR02012">
    <property type="entry name" value="tigrfam_recA"/>
    <property type="match status" value="1"/>
</dbReference>
<dbReference type="PANTHER" id="PTHR45900:SF1">
    <property type="entry name" value="MITOCHONDRIAL DNA REPAIR PROTEIN RECA HOMOLOG-RELATED"/>
    <property type="match status" value="1"/>
</dbReference>
<dbReference type="PANTHER" id="PTHR45900">
    <property type="entry name" value="RECA"/>
    <property type="match status" value="1"/>
</dbReference>
<dbReference type="Pfam" id="PF00154">
    <property type="entry name" value="RecA"/>
    <property type="match status" value="1"/>
</dbReference>
<dbReference type="Pfam" id="PF21096">
    <property type="entry name" value="RecA_C"/>
    <property type="match status" value="1"/>
</dbReference>
<dbReference type="PRINTS" id="PR00142">
    <property type="entry name" value="RECA"/>
</dbReference>
<dbReference type="SMART" id="SM00382">
    <property type="entry name" value="AAA"/>
    <property type="match status" value="1"/>
</dbReference>
<dbReference type="SUPFAM" id="SSF52540">
    <property type="entry name" value="P-loop containing nucleoside triphosphate hydrolases"/>
    <property type="match status" value="1"/>
</dbReference>
<dbReference type="SUPFAM" id="SSF54752">
    <property type="entry name" value="RecA protein, C-terminal domain"/>
    <property type="match status" value="1"/>
</dbReference>
<dbReference type="PROSITE" id="PS00321">
    <property type="entry name" value="RECA_1"/>
    <property type="match status" value="1"/>
</dbReference>
<dbReference type="PROSITE" id="PS50162">
    <property type="entry name" value="RECA_2"/>
    <property type="match status" value="1"/>
</dbReference>
<dbReference type="PROSITE" id="PS50163">
    <property type="entry name" value="RECA_3"/>
    <property type="match status" value="1"/>
</dbReference>
<sequence length="352" mass="37776">MSVPDRKRALEAAIAYIEKQFGAGSIMSLGKHSSAHEISTIKTGALSLDLALGIGGVPKGRIVEIFGPESSGKTTLATHIVANAQKMGGVAAYIDAEHALDPNYAALIGANINDLMISQPDCGEDALSIAELLARSGAVDVIVIDSVAALVPKSELEGEIGDVHVGLQARMMSQALRKLTATLARTNTCAIFINQIREKIGVSFGNPETTTGGRALKFYSSIRIDIRRIGSIKGGENFDIGNRIKVKVAKNKLAPPFRTAEFDILFNEGISSAGCIIDLAVEKNIIDKKGSWFNYQDRKLGQGREAVREELKRNKELFHELERCIYESVQASQVPAAACVDAESRQVAEAAK</sequence>
<evidence type="ECO:0000255" key="1">
    <source>
        <dbReference type="HAMAP-Rule" id="MF_00268"/>
    </source>
</evidence>
<protein>
    <recommendedName>
        <fullName evidence="1">Protein RecA</fullName>
    </recommendedName>
    <alternativeName>
        <fullName evidence="1">Recombinase A</fullName>
    </alternativeName>
</protein>
<gene>
    <name evidence="1" type="primary">recA</name>
    <name type="ordered locus">CTA_0705</name>
</gene>
<accession>Q3KL45</accession>